<reference key="1">
    <citation type="journal article" date="1997" name="J. Bacteriol.">
        <title>Complete genome sequence of Methanobacterium thermoautotrophicum deltaH: functional analysis and comparative genomics.</title>
        <authorList>
            <person name="Smith D.R."/>
            <person name="Doucette-Stamm L.A."/>
            <person name="Deloughery C."/>
            <person name="Lee H.-M."/>
            <person name="Dubois J."/>
            <person name="Aldredge T."/>
            <person name="Bashirzadeh R."/>
            <person name="Blakely D."/>
            <person name="Cook R."/>
            <person name="Gilbert K."/>
            <person name="Harrison D."/>
            <person name="Hoang L."/>
            <person name="Keagle P."/>
            <person name="Lumm W."/>
            <person name="Pothier B."/>
            <person name="Qiu D."/>
            <person name="Spadafora R."/>
            <person name="Vicare R."/>
            <person name="Wang Y."/>
            <person name="Wierzbowski J."/>
            <person name="Gibson R."/>
            <person name="Jiwani N."/>
            <person name="Caruso A."/>
            <person name="Bush D."/>
            <person name="Safer H."/>
            <person name="Patwell D."/>
            <person name="Prabhakar S."/>
            <person name="McDougall S."/>
            <person name="Shimer G."/>
            <person name="Goyal A."/>
            <person name="Pietrovski S."/>
            <person name="Church G.M."/>
            <person name="Daniels C.J."/>
            <person name="Mao J.-I."/>
            <person name="Rice P."/>
            <person name="Noelling J."/>
            <person name="Reeve J.N."/>
        </authorList>
    </citation>
    <scope>NUCLEOTIDE SEQUENCE [LARGE SCALE GENOMIC DNA]</scope>
    <source>
        <strain>ATCC 29096 / DSM 1053 / JCM 10044 / NBRC 100330 / Delta H</strain>
    </source>
</reference>
<proteinExistence type="inferred from homology"/>
<protein>
    <recommendedName>
        <fullName>Chaperone protein DnaK</fullName>
    </recommendedName>
    <alternativeName>
        <fullName>HSP70</fullName>
    </alternativeName>
    <alternativeName>
        <fullName>Heat shock 70 kDa protein</fullName>
    </alternativeName>
    <alternativeName>
        <fullName>Heat shock protein 70</fullName>
    </alternativeName>
</protein>
<accession>O27351</accession>
<name>DNAK_METTH</name>
<evidence type="ECO:0000250" key="1"/>
<evidence type="ECO:0000305" key="2"/>
<sequence>MAKKEKILGIDLGTSNSAAAVLIGGKPTIIPSAEGASQYGKSFPSCVAFTEDGQMLVGEPARRQAVTNPENTITAIKRSMGTDRKVKVHGKEYTPQEISAFILQKIKKDAEAFLGEEIKKAVITVPAYFDDNQRTATKDAGTIAGLDVVRLVNEPTAASLAYGLDKEDEDMVIMVFDLGGGTLDVTIMEFGGGVFEVRSTSGDTQLGGTDMDNAIMNYLAEEFKMETGIDLMEDDQAVQRLREAAEKAKIELSTTLTTEVNLPYITVAQDGPKHLIKTITRAKLEELVDPIVQKCAGPMEQALRDAGMTREDVDKIILVGGPTRMPIVQKFVEDFIGKPVERGIDPMECVAMGAAIQGGVLAGEIKDLVLLDVTPLSLGIETLGGVFTKLIERNTTIPTRKSQIFSTAADNQTSVDIHVLQGERPMAADNTSLGRFQLVGIPPAPRGVPQIEVTFDIDANGILNVSAKDLGTGKEQAITITAPNKLSEEEIKQKIEEAKKHAEEDRRKQEEIEIRNNADSMIYTAEKTLDELGDKVPAEKKEEVEKQVRELRELIAGDDIQAIKSKTEELTKTVQEIGVSYIPAGSTATSSTAAGR</sequence>
<feature type="chain" id="PRO_0000078599" description="Chaperone protein DnaK">
    <location>
        <begin position="1"/>
        <end position="596"/>
    </location>
</feature>
<keyword id="KW-0067">ATP-binding</keyword>
<keyword id="KW-0143">Chaperone</keyword>
<keyword id="KW-0547">Nucleotide-binding</keyword>
<keyword id="KW-1185">Reference proteome</keyword>
<organism>
    <name type="scientific">Methanothermobacter thermautotrophicus (strain ATCC 29096 / DSM 1053 / JCM 10044 / NBRC 100330 / Delta H)</name>
    <name type="common">Methanobacterium thermoautotrophicum</name>
    <dbReference type="NCBI Taxonomy" id="187420"/>
    <lineage>
        <taxon>Archaea</taxon>
        <taxon>Methanobacteriati</taxon>
        <taxon>Methanobacteriota</taxon>
        <taxon>Methanomada group</taxon>
        <taxon>Methanobacteria</taxon>
        <taxon>Methanobacteriales</taxon>
        <taxon>Methanobacteriaceae</taxon>
        <taxon>Methanothermobacter</taxon>
    </lineage>
</organism>
<dbReference type="EMBL" id="AE000666">
    <property type="protein sequence ID" value="AAB85772.1"/>
    <property type="molecule type" value="Genomic_DNA"/>
</dbReference>
<dbReference type="PIR" id="G69038">
    <property type="entry name" value="G69038"/>
</dbReference>
<dbReference type="SMR" id="O27351"/>
<dbReference type="STRING" id="187420.MTH_1290"/>
<dbReference type="PaxDb" id="187420-MTH_1290"/>
<dbReference type="EnsemblBacteria" id="AAB85772">
    <property type="protein sequence ID" value="AAB85772"/>
    <property type="gene ID" value="MTH_1290"/>
</dbReference>
<dbReference type="KEGG" id="mth:MTH_1290"/>
<dbReference type="PATRIC" id="fig|187420.15.peg.1263"/>
<dbReference type="HOGENOM" id="CLU_005965_2_4_2"/>
<dbReference type="InParanoid" id="O27351"/>
<dbReference type="Proteomes" id="UP000005223">
    <property type="component" value="Chromosome"/>
</dbReference>
<dbReference type="GO" id="GO:0005524">
    <property type="term" value="F:ATP binding"/>
    <property type="evidence" value="ECO:0007669"/>
    <property type="project" value="UniProtKB-UniRule"/>
</dbReference>
<dbReference type="GO" id="GO:0140662">
    <property type="term" value="F:ATP-dependent protein folding chaperone"/>
    <property type="evidence" value="ECO:0007669"/>
    <property type="project" value="InterPro"/>
</dbReference>
<dbReference type="GO" id="GO:0051082">
    <property type="term" value="F:unfolded protein binding"/>
    <property type="evidence" value="ECO:0007669"/>
    <property type="project" value="InterPro"/>
</dbReference>
<dbReference type="CDD" id="cd10234">
    <property type="entry name" value="ASKHA_NBD_HSP70_DnaK-like"/>
    <property type="match status" value="1"/>
</dbReference>
<dbReference type="FunFam" id="2.60.34.10:FF:000014">
    <property type="entry name" value="Chaperone protein DnaK HSP70"/>
    <property type="match status" value="1"/>
</dbReference>
<dbReference type="FunFam" id="1.20.1270.10:FF:000001">
    <property type="entry name" value="Molecular chaperone DnaK"/>
    <property type="match status" value="1"/>
</dbReference>
<dbReference type="FunFam" id="3.30.420.40:FF:000071">
    <property type="entry name" value="Molecular chaperone DnaK"/>
    <property type="match status" value="1"/>
</dbReference>
<dbReference type="FunFam" id="3.90.640.10:FF:000003">
    <property type="entry name" value="Molecular chaperone DnaK"/>
    <property type="match status" value="1"/>
</dbReference>
<dbReference type="Gene3D" id="1.20.1270.10">
    <property type="match status" value="1"/>
</dbReference>
<dbReference type="Gene3D" id="3.30.420.40">
    <property type="match status" value="2"/>
</dbReference>
<dbReference type="Gene3D" id="3.90.640.10">
    <property type="entry name" value="Actin, Chain A, domain 4"/>
    <property type="match status" value="1"/>
</dbReference>
<dbReference type="Gene3D" id="2.60.34.10">
    <property type="entry name" value="Substrate Binding Domain Of DNAk, Chain A, domain 1"/>
    <property type="match status" value="1"/>
</dbReference>
<dbReference type="HAMAP" id="MF_00332">
    <property type="entry name" value="DnaK"/>
    <property type="match status" value="1"/>
</dbReference>
<dbReference type="InterPro" id="IPR043129">
    <property type="entry name" value="ATPase_NBD"/>
</dbReference>
<dbReference type="InterPro" id="IPR012725">
    <property type="entry name" value="Chaperone_DnaK"/>
</dbReference>
<dbReference type="InterPro" id="IPR018181">
    <property type="entry name" value="Heat_shock_70_CS"/>
</dbReference>
<dbReference type="InterPro" id="IPR029048">
    <property type="entry name" value="HSP70_C_sf"/>
</dbReference>
<dbReference type="InterPro" id="IPR029047">
    <property type="entry name" value="HSP70_peptide-bd_sf"/>
</dbReference>
<dbReference type="InterPro" id="IPR013126">
    <property type="entry name" value="Hsp_70_fam"/>
</dbReference>
<dbReference type="NCBIfam" id="NF001413">
    <property type="entry name" value="PRK00290.1"/>
    <property type="match status" value="1"/>
</dbReference>
<dbReference type="NCBIfam" id="TIGR02350">
    <property type="entry name" value="prok_dnaK"/>
    <property type="match status" value="1"/>
</dbReference>
<dbReference type="PANTHER" id="PTHR19375">
    <property type="entry name" value="HEAT SHOCK PROTEIN 70KDA"/>
    <property type="match status" value="1"/>
</dbReference>
<dbReference type="Pfam" id="PF00012">
    <property type="entry name" value="HSP70"/>
    <property type="match status" value="1"/>
</dbReference>
<dbReference type="PRINTS" id="PR00301">
    <property type="entry name" value="HEATSHOCK70"/>
</dbReference>
<dbReference type="SUPFAM" id="SSF53067">
    <property type="entry name" value="Actin-like ATPase domain"/>
    <property type="match status" value="2"/>
</dbReference>
<dbReference type="SUPFAM" id="SSF100934">
    <property type="entry name" value="Heat shock protein 70kD (HSP70), C-terminal subdomain"/>
    <property type="match status" value="1"/>
</dbReference>
<dbReference type="SUPFAM" id="SSF100920">
    <property type="entry name" value="Heat shock protein 70kD (HSP70), peptide-binding domain"/>
    <property type="match status" value="1"/>
</dbReference>
<dbReference type="PROSITE" id="PS00297">
    <property type="entry name" value="HSP70_1"/>
    <property type="match status" value="1"/>
</dbReference>
<dbReference type="PROSITE" id="PS00329">
    <property type="entry name" value="HSP70_2"/>
    <property type="match status" value="1"/>
</dbReference>
<dbReference type="PROSITE" id="PS01036">
    <property type="entry name" value="HSP70_3"/>
    <property type="match status" value="1"/>
</dbReference>
<comment type="function">
    <text evidence="1">Acts as a chaperone.</text>
</comment>
<comment type="similarity">
    <text evidence="2">Belongs to the heat shock protein 70 family.</text>
</comment>
<gene>
    <name type="primary">dnaK</name>
    <name type="ordered locus">MTH_1290</name>
</gene>